<accession>Q9PSF9</accession>
<comment type="function">
    <text evidence="4">Snake venom phospholipase A2 (PLA2) that inhibits ADP-induced platelet aggregation. PLA2 catalyzes the calcium-dependent hydrolysis of the 2-acyl groups in 3-sn-phosphoglycerides.</text>
</comment>
<comment type="catalytic activity">
    <reaction evidence="2 3">
        <text>a 1,2-diacyl-sn-glycero-3-phosphocholine + H2O = a 1-acyl-sn-glycero-3-phosphocholine + a fatty acid + H(+)</text>
        <dbReference type="Rhea" id="RHEA:15801"/>
        <dbReference type="ChEBI" id="CHEBI:15377"/>
        <dbReference type="ChEBI" id="CHEBI:15378"/>
        <dbReference type="ChEBI" id="CHEBI:28868"/>
        <dbReference type="ChEBI" id="CHEBI:57643"/>
        <dbReference type="ChEBI" id="CHEBI:58168"/>
        <dbReference type="EC" id="3.1.1.4"/>
    </reaction>
</comment>
<comment type="cofactor">
    <cofactor evidence="1">
        <name>Ca(2+)</name>
        <dbReference type="ChEBI" id="CHEBI:29108"/>
    </cofactor>
    <text evidence="1">Binds 1 Ca(2+) ion.</text>
</comment>
<comment type="activity regulation">
    <text evidence="4">Inhibited by ethylenediamine tetraacetic acid, ethyleneglycol (beta-aminoethyl) N,N,N',N'-tetraacetic acid, p-bromophenacyl bromide or N-bromosuccinimide, but not by iodoacetic acid or diisopropyl fluorophosphate.</text>
</comment>
<comment type="subcellular location">
    <subcellularLocation>
        <location>Secreted</location>
    </subcellularLocation>
</comment>
<comment type="tissue specificity">
    <text>Expressed by the venom gland.</text>
</comment>
<comment type="similarity">
    <text evidence="5">Belongs to the phospholipase A2 family. Group II subfamily.</text>
</comment>
<sequence length="39" mass="4212">SLLELGKMILQETGKIAITSYGSYGCNCGWGHRGRPKDA</sequence>
<organism>
    <name type="scientific">Agkistrodon bilineatus</name>
    <name type="common">Cantil</name>
    <name type="synonym">Tropical moccasin</name>
    <dbReference type="NCBI Taxonomy" id="8718"/>
    <lineage>
        <taxon>Eukaryota</taxon>
        <taxon>Metazoa</taxon>
        <taxon>Chordata</taxon>
        <taxon>Craniata</taxon>
        <taxon>Vertebrata</taxon>
        <taxon>Euteleostomi</taxon>
        <taxon>Lepidosauria</taxon>
        <taxon>Squamata</taxon>
        <taxon>Bifurcata</taxon>
        <taxon>Unidentata</taxon>
        <taxon>Episquamata</taxon>
        <taxon>Toxicofera</taxon>
        <taxon>Serpentes</taxon>
        <taxon>Colubroidea</taxon>
        <taxon>Viperidae</taxon>
        <taxon>Crotalinae</taxon>
        <taxon>Agkistrodon</taxon>
    </lineage>
</organism>
<name>PA2B2_AGKBI</name>
<keyword id="KW-0106">Calcium</keyword>
<keyword id="KW-0903">Direct protein sequencing</keyword>
<keyword id="KW-1199">Hemostasis impairing toxin</keyword>
<keyword id="KW-0378">Hydrolase</keyword>
<keyword id="KW-0442">Lipid degradation</keyword>
<keyword id="KW-0443">Lipid metabolism</keyword>
<keyword id="KW-1201">Platelet aggregation inhibiting toxin</keyword>
<keyword id="KW-0964">Secreted</keyword>
<keyword id="KW-0800">Toxin</keyword>
<protein>
    <recommendedName>
        <fullName>Basic phospholipase A2 2</fullName>
        <shortName>svPLA2</shortName>
        <ecNumber>3.1.1.4</ecNumber>
    </recommendedName>
    <alternativeName>
        <fullName>Phosphatidylcholine 2-acylhydrolase</fullName>
    </alternativeName>
    <alternativeName>
        <fullName>Phospholipase A2 II</fullName>
        <shortName>PLA2-II</shortName>
    </alternativeName>
</protein>
<proteinExistence type="evidence at protein level"/>
<dbReference type="EC" id="3.1.1.4"/>
<dbReference type="SMR" id="Q9PSF9"/>
<dbReference type="GO" id="GO:0005576">
    <property type="term" value="C:extracellular region"/>
    <property type="evidence" value="ECO:0007669"/>
    <property type="project" value="UniProtKB-SubCell"/>
</dbReference>
<dbReference type="GO" id="GO:0004623">
    <property type="term" value="F:phospholipase A2 activity"/>
    <property type="evidence" value="ECO:0007669"/>
    <property type="project" value="UniProtKB-EC"/>
</dbReference>
<dbReference type="GO" id="GO:0090729">
    <property type="term" value="F:toxin activity"/>
    <property type="evidence" value="ECO:0007669"/>
    <property type="project" value="UniProtKB-KW"/>
</dbReference>
<dbReference type="GO" id="GO:0050482">
    <property type="term" value="P:arachidonate secretion"/>
    <property type="evidence" value="ECO:0007669"/>
    <property type="project" value="InterPro"/>
</dbReference>
<dbReference type="GO" id="GO:0016042">
    <property type="term" value="P:lipid catabolic process"/>
    <property type="evidence" value="ECO:0007669"/>
    <property type="project" value="UniProtKB-KW"/>
</dbReference>
<dbReference type="GO" id="GO:0006644">
    <property type="term" value="P:phospholipid metabolic process"/>
    <property type="evidence" value="ECO:0007669"/>
    <property type="project" value="InterPro"/>
</dbReference>
<dbReference type="Gene3D" id="1.20.90.10">
    <property type="entry name" value="Phospholipase A2 domain"/>
    <property type="match status" value="1"/>
</dbReference>
<dbReference type="InterPro" id="IPR016090">
    <property type="entry name" value="PLipase_A2_dom"/>
</dbReference>
<dbReference type="InterPro" id="IPR036444">
    <property type="entry name" value="PLipase_A2_dom_sf"/>
</dbReference>
<dbReference type="Pfam" id="PF00068">
    <property type="entry name" value="Phospholip_A2_1"/>
    <property type="match status" value="1"/>
</dbReference>
<dbReference type="SUPFAM" id="SSF48619">
    <property type="entry name" value="Phospholipase A2, PLA2"/>
    <property type="match status" value="1"/>
</dbReference>
<feature type="chain" id="PRO_0000161593" description="Basic phospholipase A2 2">
    <location>
        <begin position="1"/>
        <end position="39" status="greater than"/>
    </location>
</feature>
<feature type="non-terminal residue">
    <location>
        <position position="39"/>
    </location>
</feature>
<reference key="1">
    <citation type="journal article" date="1994" name="Int. J. Biochem.">
        <title>Characterization and amino-terminal sequence of phospholipase A2-II from the venom of Agkistrodon bilineatus (common cantil).</title>
        <authorList>
            <person name="Nikai T."/>
            <person name="Komori Y."/>
            <person name="Ohara A."/>
            <person name="Yagihashi S."/>
            <person name="Ohizumi Y."/>
            <person name="Sugihara H."/>
        </authorList>
    </citation>
    <scope>PROTEIN SEQUENCE</scope>
    <scope>FUNCTION</scope>
    <scope>ACTIVITY REGULATION</scope>
    <source>
        <tissue>Venom</tissue>
    </source>
</reference>
<evidence type="ECO:0000250" key="1"/>
<evidence type="ECO:0000255" key="2">
    <source>
        <dbReference type="PROSITE-ProRule" id="PRU10035"/>
    </source>
</evidence>
<evidence type="ECO:0000255" key="3">
    <source>
        <dbReference type="PROSITE-ProRule" id="PRU10036"/>
    </source>
</evidence>
<evidence type="ECO:0000269" key="4">
    <source>
    </source>
</evidence>
<evidence type="ECO:0000305" key="5"/>